<feature type="signal peptide" evidence="1">
    <location>
        <begin position="1"/>
        <end position="43"/>
    </location>
</feature>
<feature type="chain" id="PRO_0000259075" description="Tol-Pal system protein TolB" evidence="1">
    <location>
        <begin position="44"/>
        <end position="446"/>
    </location>
</feature>
<comment type="function">
    <text evidence="1">Part of the Tol-Pal system, which plays a role in outer membrane invagination during cell division and is important for maintaining outer membrane integrity.</text>
</comment>
<comment type="subunit">
    <text evidence="1">The Tol-Pal system is composed of five core proteins: the inner membrane proteins TolA, TolQ and TolR, the periplasmic protein TolB and the outer membrane protein Pal. They form a network linking the inner and outer membranes and the peptidoglycan layer.</text>
</comment>
<comment type="subcellular location">
    <subcellularLocation>
        <location evidence="1">Periplasm</location>
    </subcellularLocation>
</comment>
<comment type="similarity">
    <text evidence="1">Belongs to the TolB family.</text>
</comment>
<accession>Q1LJX8</accession>
<reference key="1">
    <citation type="journal article" date="2010" name="PLoS ONE">
        <title>The complete genome sequence of Cupriavidus metallidurans strain CH34, a master survivalist in harsh and anthropogenic environments.</title>
        <authorList>
            <person name="Janssen P.J."/>
            <person name="Van Houdt R."/>
            <person name="Moors H."/>
            <person name="Monsieurs P."/>
            <person name="Morin N."/>
            <person name="Michaux A."/>
            <person name="Benotmane M.A."/>
            <person name="Leys N."/>
            <person name="Vallaeys T."/>
            <person name="Lapidus A."/>
            <person name="Monchy S."/>
            <person name="Medigue C."/>
            <person name="Taghavi S."/>
            <person name="McCorkle S."/>
            <person name="Dunn J."/>
            <person name="van der Lelie D."/>
            <person name="Mergeay M."/>
        </authorList>
    </citation>
    <scope>NUCLEOTIDE SEQUENCE [LARGE SCALE GENOMIC DNA]</scope>
    <source>
        <strain>ATCC 43123 / DSM 2839 / NBRC 102507 / CH34</strain>
    </source>
</reference>
<proteinExistence type="inferred from homology"/>
<keyword id="KW-0131">Cell cycle</keyword>
<keyword id="KW-0132">Cell division</keyword>
<keyword id="KW-0574">Periplasm</keyword>
<keyword id="KW-1185">Reference proteome</keyword>
<keyword id="KW-0732">Signal</keyword>
<name>TOLB_CUPMC</name>
<gene>
    <name evidence="1" type="primary">tolB</name>
    <name type="ordered locus">Rmet_2675</name>
</gene>
<sequence length="446" mass="48010">MRKLWAPNWLSRRQNANPTRDQSRHALMAWLAAALMSAGAAHAQLNVEITGVGSNQFPVATANFQGEAQAPQNLTAIIRSDLTNSGRFRNVDPAGATVAESAQVDLGSWKAKGADAFVAGSVTPTSNGQYEVRFRLYDTAKGQSLGGLAFTVTQGQLRVTAHKIADYIYEKLLGERGVFATRLSYVSKVGNRYQLLISDSDGQNAQIALTSTEPIISPAWSPDGRRVAYVSFEAKKPVVYVHDLATGKRVVVSNQKGNNSAPSWSPDGQHLAVSLSRDGNTQIYQVNADGSGLRRLTRSSAIDTEPQFSPDGRSIYFTSDRGGAPQIYRMPASGEESGAAQRVTFKGSYNVSPRISPDGKYLAYISRSGGFRLQLQDLSNGDVTSLTDTTNDESPSFAANGKYILYATRVGGRSVLAAVSTDGRTKQVLSLQSGAVREPSWGPFMQ</sequence>
<protein>
    <recommendedName>
        <fullName evidence="1">Tol-Pal system protein TolB</fullName>
    </recommendedName>
</protein>
<evidence type="ECO:0000255" key="1">
    <source>
        <dbReference type="HAMAP-Rule" id="MF_00671"/>
    </source>
</evidence>
<organism>
    <name type="scientific">Cupriavidus metallidurans (strain ATCC 43123 / DSM 2839 / NBRC 102507 / CH34)</name>
    <name type="common">Ralstonia metallidurans</name>
    <dbReference type="NCBI Taxonomy" id="266264"/>
    <lineage>
        <taxon>Bacteria</taxon>
        <taxon>Pseudomonadati</taxon>
        <taxon>Pseudomonadota</taxon>
        <taxon>Betaproteobacteria</taxon>
        <taxon>Burkholderiales</taxon>
        <taxon>Burkholderiaceae</taxon>
        <taxon>Cupriavidus</taxon>
    </lineage>
</organism>
<dbReference type="EMBL" id="CP000352">
    <property type="protein sequence ID" value="ABF09548.1"/>
    <property type="molecule type" value="Genomic_DNA"/>
</dbReference>
<dbReference type="RefSeq" id="WP_011517249.1">
    <property type="nucleotide sequence ID" value="NC_007973.1"/>
</dbReference>
<dbReference type="SMR" id="Q1LJX8"/>
<dbReference type="STRING" id="266264.Rmet_2675"/>
<dbReference type="KEGG" id="rme:Rmet_2675"/>
<dbReference type="eggNOG" id="COG0823">
    <property type="taxonomic scope" value="Bacteria"/>
</dbReference>
<dbReference type="HOGENOM" id="CLU_047123_0_0_4"/>
<dbReference type="Proteomes" id="UP000002429">
    <property type="component" value="Chromosome"/>
</dbReference>
<dbReference type="GO" id="GO:0042597">
    <property type="term" value="C:periplasmic space"/>
    <property type="evidence" value="ECO:0007669"/>
    <property type="project" value="UniProtKB-SubCell"/>
</dbReference>
<dbReference type="GO" id="GO:0051301">
    <property type="term" value="P:cell division"/>
    <property type="evidence" value="ECO:0007669"/>
    <property type="project" value="UniProtKB-UniRule"/>
</dbReference>
<dbReference type="GO" id="GO:0017038">
    <property type="term" value="P:protein import"/>
    <property type="evidence" value="ECO:0007669"/>
    <property type="project" value="InterPro"/>
</dbReference>
<dbReference type="Gene3D" id="2.120.10.30">
    <property type="entry name" value="TolB, C-terminal domain"/>
    <property type="match status" value="1"/>
</dbReference>
<dbReference type="Gene3D" id="3.40.50.10070">
    <property type="entry name" value="TolB, N-terminal domain"/>
    <property type="match status" value="1"/>
</dbReference>
<dbReference type="HAMAP" id="MF_00671">
    <property type="entry name" value="TolB"/>
    <property type="match status" value="1"/>
</dbReference>
<dbReference type="InterPro" id="IPR011042">
    <property type="entry name" value="6-blade_b-propeller_TolB-like"/>
</dbReference>
<dbReference type="InterPro" id="IPR011659">
    <property type="entry name" value="PD40"/>
</dbReference>
<dbReference type="InterPro" id="IPR014167">
    <property type="entry name" value="Tol-Pal_TolB"/>
</dbReference>
<dbReference type="InterPro" id="IPR007195">
    <property type="entry name" value="TolB_N"/>
</dbReference>
<dbReference type="NCBIfam" id="TIGR02800">
    <property type="entry name" value="propeller_TolB"/>
    <property type="match status" value="1"/>
</dbReference>
<dbReference type="PANTHER" id="PTHR36842:SF1">
    <property type="entry name" value="PROTEIN TOLB"/>
    <property type="match status" value="1"/>
</dbReference>
<dbReference type="PANTHER" id="PTHR36842">
    <property type="entry name" value="PROTEIN TOLB HOMOLOG"/>
    <property type="match status" value="1"/>
</dbReference>
<dbReference type="Pfam" id="PF07676">
    <property type="entry name" value="PD40"/>
    <property type="match status" value="5"/>
</dbReference>
<dbReference type="Pfam" id="PF04052">
    <property type="entry name" value="TolB_N"/>
    <property type="match status" value="1"/>
</dbReference>
<dbReference type="SUPFAM" id="SSF52964">
    <property type="entry name" value="TolB, N-terminal domain"/>
    <property type="match status" value="1"/>
</dbReference>
<dbReference type="SUPFAM" id="SSF69304">
    <property type="entry name" value="Tricorn protease N-terminal domain"/>
    <property type="match status" value="1"/>
</dbReference>